<organism>
    <name type="scientific">Rattus norvegicus</name>
    <name type="common">Rat</name>
    <dbReference type="NCBI Taxonomy" id="10116"/>
    <lineage>
        <taxon>Eukaryota</taxon>
        <taxon>Metazoa</taxon>
        <taxon>Chordata</taxon>
        <taxon>Craniata</taxon>
        <taxon>Vertebrata</taxon>
        <taxon>Euteleostomi</taxon>
        <taxon>Mammalia</taxon>
        <taxon>Eutheria</taxon>
        <taxon>Euarchontoglires</taxon>
        <taxon>Glires</taxon>
        <taxon>Rodentia</taxon>
        <taxon>Myomorpha</taxon>
        <taxon>Muroidea</taxon>
        <taxon>Muridae</taxon>
        <taxon>Murinae</taxon>
        <taxon>Rattus</taxon>
    </lineage>
</organism>
<sequence length="644" mass="72055">MAGQLRLTSGKDEDHFQHQGAVELLAFNFLLILTILTIWLFKNHRFRFLHETGGAMVYGLIMGLILRYATAPTDIDSGTVYNCGKLLFSPSTLLVNITDQVYEYKYQREINQHNISPHQGNAILEKMTFDPEIFFNVLLPPIIFHAGYSLKKRHFFQNLGSILTYAFLGTAISCVVIGLIMYGFVKAMVHAGQLKSGDFHFTDCLFFGSLMSATDPVTVLAIFHELHVDPDLYTLLFGESVLNDAVAIVLTYSISIYSPKENPNAFDTAAFFQSVGNFLGIFAGSFAMGSAYAVVTALLTKFTKLREFPMLETGLFFLLSWSAFLSAEAAGLTGIVAVLFCGVTQAHYTYNNLSSDSKLRTKQLFEFMNFLAENVIFCYMGLALFTFQNHIFNALFILGAFLAIFVARACNIYPLSFLLNLGRKQKIPWNFQHMMMFSGLRGAIAFALAIRNTESQPKQMMFTTTLLLVFFTVWVFGGGTTPMLTWLQIRVGVDLDESLKEEPSSQQEANKVDKDMTKTESAQLFRMWYGFDHKYLKPILTHSGPPLTTTLPAWCGPVSRLLTSPQAYGEQLKEDDVECIVNQDELAMNYQEQSPTSSSPATKLALDQKSSGLTLGKENIYEGDLGLGGYELKLEQTRGQPQMD</sequence>
<evidence type="ECO:0000250" key="1">
    <source>
        <dbReference type="UniProtKB" id="F7B113"/>
    </source>
</evidence>
<evidence type="ECO:0000250" key="2">
    <source>
        <dbReference type="UniProtKB" id="Q8BZ00"/>
    </source>
</evidence>
<evidence type="ECO:0000250" key="3">
    <source>
        <dbReference type="UniProtKB" id="Q8IVB4"/>
    </source>
</evidence>
<evidence type="ECO:0000269" key="4">
    <source>
    </source>
</evidence>
<evidence type="ECO:0000269" key="5">
    <source>
    </source>
</evidence>
<evidence type="ECO:0000305" key="6"/>
<dbReference type="EMBL" id="AABR07071136">
    <property type="status" value="NOT_ANNOTATED_CDS"/>
    <property type="molecule type" value="Genomic_DNA"/>
</dbReference>
<dbReference type="EMBL" id="AABR07071137">
    <property type="status" value="NOT_ANNOTATED_CDS"/>
    <property type="molecule type" value="Genomic_DNA"/>
</dbReference>
<dbReference type="EMBL" id="AABR07071138">
    <property type="status" value="NOT_ANNOTATED_CDS"/>
    <property type="molecule type" value="Genomic_DNA"/>
</dbReference>
<dbReference type="EMBL" id="AABR07071139">
    <property type="status" value="NOT_ANNOTATED_CDS"/>
    <property type="molecule type" value="Genomic_DNA"/>
</dbReference>
<dbReference type="EMBL" id="AABR07071140">
    <property type="status" value="NOT_ANNOTATED_CDS"/>
    <property type="molecule type" value="Genomic_DNA"/>
</dbReference>
<dbReference type="EMBL" id="AABR07071141">
    <property type="status" value="NOT_ANNOTATED_CDS"/>
    <property type="molecule type" value="Genomic_DNA"/>
</dbReference>
<dbReference type="EMBL" id="AABR07071142">
    <property type="status" value="NOT_ANNOTATED_CDS"/>
    <property type="molecule type" value="Genomic_DNA"/>
</dbReference>
<dbReference type="EMBL" id="AABR07071143">
    <property type="status" value="NOT_ANNOTATED_CDS"/>
    <property type="molecule type" value="Genomic_DNA"/>
</dbReference>
<dbReference type="EMBL" id="AABR07071144">
    <property type="status" value="NOT_ANNOTATED_CDS"/>
    <property type="molecule type" value="Genomic_DNA"/>
</dbReference>
<dbReference type="EMBL" id="AABR07071145">
    <property type="status" value="NOT_ANNOTATED_CDS"/>
    <property type="molecule type" value="Genomic_DNA"/>
</dbReference>
<dbReference type="EMBL" id="AABR07071146">
    <property type="status" value="NOT_ANNOTATED_CDS"/>
    <property type="molecule type" value="Genomic_DNA"/>
</dbReference>
<dbReference type="EMBL" id="AABR07071147">
    <property type="status" value="NOT_ANNOTATED_CDS"/>
    <property type="molecule type" value="Genomic_DNA"/>
</dbReference>
<dbReference type="EMBL" id="AABR07071148">
    <property type="status" value="NOT_ANNOTATED_CDS"/>
    <property type="molecule type" value="Genomic_DNA"/>
</dbReference>
<dbReference type="EMBL" id="AABR07071149">
    <property type="status" value="NOT_ANNOTATED_CDS"/>
    <property type="molecule type" value="Genomic_DNA"/>
</dbReference>
<dbReference type="EMBL" id="AABR07071150">
    <property type="status" value="NOT_ANNOTATED_CDS"/>
    <property type="molecule type" value="Genomic_DNA"/>
</dbReference>
<dbReference type="EMBL" id="AABR07071151">
    <property type="status" value="NOT_ANNOTATED_CDS"/>
    <property type="molecule type" value="Genomic_DNA"/>
</dbReference>
<dbReference type="EMBL" id="AABR07071152">
    <property type="status" value="NOT_ANNOTATED_CDS"/>
    <property type="molecule type" value="Genomic_DNA"/>
</dbReference>
<dbReference type="EMBL" id="AABR07071153">
    <property type="status" value="NOT_ANNOTATED_CDS"/>
    <property type="molecule type" value="Genomic_DNA"/>
</dbReference>
<dbReference type="EMBL" id="AABR07071154">
    <property type="status" value="NOT_ANNOTATED_CDS"/>
    <property type="molecule type" value="Genomic_DNA"/>
</dbReference>
<dbReference type="EMBL" id="AABR07071155">
    <property type="status" value="NOT_ANNOTATED_CDS"/>
    <property type="molecule type" value="Genomic_DNA"/>
</dbReference>
<dbReference type="EMBL" id="AABR07071156">
    <property type="status" value="NOT_ANNOTATED_CDS"/>
    <property type="molecule type" value="Genomic_DNA"/>
</dbReference>
<dbReference type="EMBL" id="AABR07071157">
    <property type="status" value="NOT_ANNOTATED_CDS"/>
    <property type="molecule type" value="Genomic_DNA"/>
</dbReference>
<dbReference type="EMBL" id="AABR07071158">
    <property type="status" value="NOT_ANNOTATED_CDS"/>
    <property type="molecule type" value="Genomic_DNA"/>
</dbReference>
<dbReference type="EMBL" id="AABR07071159">
    <property type="status" value="NOT_ANNOTATED_CDS"/>
    <property type="molecule type" value="Genomic_DNA"/>
</dbReference>
<dbReference type="EMBL" id="AABR07071160">
    <property type="status" value="NOT_ANNOTATED_CDS"/>
    <property type="molecule type" value="Genomic_DNA"/>
</dbReference>
<dbReference type="EMBL" id="AABR07071161">
    <property type="status" value="NOT_ANNOTATED_CDS"/>
    <property type="molecule type" value="Genomic_DNA"/>
</dbReference>
<dbReference type="EMBL" id="AABR07071162">
    <property type="status" value="NOT_ANNOTATED_CDS"/>
    <property type="molecule type" value="Genomic_DNA"/>
</dbReference>
<dbReference type="EMBL" id="AABR07071163">
    <property type="status" value="NOT_ANNOTATED_CDS"/>
    <property type="molecule type" value="Genomic_DNA"/>
</dbReference>
<dbReference type="EMBL" id="AABR07071164">
    <property type="status" value="NOT_ANNOTATED_CDS"/>
    <property type="molecule type" value="Genomic_DNA"/>
</dbReference>
<dbReference type="RefSeq" id="NP_001258367.1">
    <property type="nucleotide sequence ID" value="NM_001271438.2"/>
</dbReference>
<dbReference type="SMR" id="D4A7H1"/>
<dbReference type="FunCoup" id="D4A7H1">
    <property type="interactions" value="376"/>
</dbReference>
<dbReference type="STRING" id="10116.ENSRNOP00000011358"/>
<dbReference type="PhosphoSitePlus" id="D4A7H1"/>
<dbReference type="PaxDb" id="10116-ENSRNOP00000011358"/>
<dbReference type="PeptideAtlas" id="D4A7H1"/>
<dbReference type="Ensembl" id="ENSRNOT00000011358.8">
    <property type="protein sequence ID" value="ENSRNOP00000011358.6"/>
    <property type="gene ID" value="ENSRNOG00000008554.8"/>
</dbReference>
<dbReference type="GeneID" id="363115"/>
<dbReference type="KEGG" id="rno:363115"/>
<dbReference type="AGR" id="RGD:1560736"/>
<dbReference type="CTD" id="285195"/>
<dbReference type="RGD" id="1560736">
    <property type="gene designation" value="Slc9a9"/>
</dbReference>
<dbReference type="eggNOG" id="KOG1965">
    <property type="taxonomic scope" value="Eukaryota"/>
</dbReference>
<dbReference type="GeneTree" id="ENSGT00940000160094"/>
<dbReference type="HOGENOM" id="CLU_005912_7_0_1"/>
<dbReference type="InParanoid" id="D4A7H1"/>
<dbReference type="OMA" id="FVKAMIY"/>
<dbReference type="OrthoDB" id="196264at2759"/>
<dbReference type="Reactome" id="R-RNO-425986">
    <property type="pathway name" value="Sodium/Proton exchangers"/>
</dbReference>
<dbReference type="PRO" id="PR:D4A7H1"/>
<dbReference type="Proteomes" id="UP000002494">
    <property type="component" value="Chromosome 8"/>
</dbReference>
<dbReference type="Bgee" id="ENSRNOG00000008554">
    <property type="expression patterns" value="Expressed in thymus and 18 other cell types or tissues"/>
</dbReference>
<dbReference type="GO" id="GO:0005769">
    <property type="term" value="C:early endosome"/>
    <property type="evidence" value="ECO:0000266"/>
    <property type="project" value="RGD"/>
</dbReference>
<dbReference type="GO" id="GO:0031901">
    <property type="term" value="C:early endosome membrane"/>
    <property type="evidence" value="ECO:0007669"/>
    <property type="project" value="UniProtKB-SubCell"/>
</dbReference>
<dbReference type="GO" id="GO:0032009">
    <property type="term" value="C:early phagosome"/>
    <property type="evidence" value="ECO:0000266"/>
    <property type="project" value="RGD"/>
</dbReference>
<dbReference type="GO" id="GO:0031902">
    <property type="term" value="C:late endosome membrane"/>
    <property type="evidence" value="ECO:0007669"/>
    <property type="project" value="UniProtKB-SubCell"/>
</dbReference>
<dbReference type="GO" id="GO:0030670">
    <property type="term" value="C:phagocytic vesicle membrane"/>
    <property type="evidence" value="ECO:0000266"/>
    <property type="project" value="RGD"/>
</dbReference>
<dbReference type="GO" id="GO:0005886">
    <property type="term" value="C:plasma membrane"/>
    <property type="evidence" value="ECO:0000266"/>
    <property type="project" value="RGD"/>
</dbReference>
<dbReference type="GO" id="GO:0055037">
    <property type="term" value="C:recycling endosome"/>
    <property type="evidence" value="ECO:0000266"/>
    <property type="project" value="RGD"/>
</dbReference>
<dbReference type="GO" id="GO:0055038">
    <property type="term" value="C:recycling endosome membrane"/>
    <property type="evidence" value="ECO:0000266"/>
    <property type="project" value="RGD"/>
</dbReference>
<dbReference type="GO" id="GO:0015386">
    <property type="term" value="F:potassium:proton antiporter activity"/>
    <property type="evidence" value="ECO:0000250"/>
    <property type="project" value="UniProtKB"/>
</dbReference>
<dbReference type="GO" id="GO:0015385">
    <property type="term" value="F:sodium:proton antiporter activity"/>
    <property type="evidence" value="ECO:0000250"/>
    <property type="project" value="UniProtKB"/>
</dbReference>
<dbReference type="GO" id="GO:0042742">
    <property type="term" value="P:defense response to bacterium"/>
    <property type="evidence" value="ECO:0000266"/>
    <property type="project" value="RGD"/>
</dbReference>
<dbReference type="GO" id="GO:0090382">
    <property type="term" value="P:phagosome maturation"/>
    <property type="evidence" value="ECO:0000266"/>
    <property type="project" value="RGD"/>
</dbReference>
<dbReference type="GO" id="GO:0071805">
    <property type="term" value="P:potassium ion transmembrane transport"/>
    <property type="evidence" value="ECO:0000250"/>
    <property type="project" value="UniProtKB"/>
</dbReference>
<dbReference type="GO" id="GO:0051453">
    <property type="term" value="P:regulation of intracellular pH"/>
    <property type="evidence" value="ECO:0000250"/>
    <property type="project" value="UniProtKB"/>
</dbReference>
<dbReference type="GO" id="GO:0098719">
    <property type="term" value="P:sodium ion import across plasma membrane"/>
    <property type="evidence" value="ECO:0000318"/>
    <property type="project" value="GO_Central"/>
</dbReference>
<dbReference type="GO" id="GO:0035725">
    <property type="term" value="P:sodium ion transmembrane transport"/>
    <property type="evidence" value="ECO:0000250"/>
    <property type="project" value="UniProtKB"/>
</dbReference>
<dbReference type="Gene3D" id="6.10.140.1330">
    <property type="match status" value="1"/>
</dbReference>
<dbReference type="InterPro" id="IPR018422">
    <property type="entry name" value="Cation/H_exchanger_CPA1"/>
</dbReference>
<dbReference type="InterPro" id="IPR006153">
    <property type="entry name" value="Cation/H_exchanger_TM"/>
</dbReference>
<dbReference type="InterPro" id="IPR004709">
    <property type="entry name" value="NaH_exchanger"/>
</dbReference>
<dbReference type="InterPro" id="IPR002090">
    <property type="entry name" value="NHE-6/7/9"/>
</dbReference>
<dbReference type="NCBIfam" id="TIGR00840">
    <property type="entry name" value="b_cpa1"/>
    <property type="match status" value="1"/>
</dbReference>
<dbReference type="PANTHER" id="PTHR10110">
    <property type="entry name" value="SODIUM/HYDROGEN EXCHANGER"/>
    <property type="match status" value="1"/>
</dbReference>
<dbReference type="PANTHER" id="PTHR10110:SF61">
    <property type="entry name" value="SODIUM_HYDROGEN EXCHANGER 9"/>
    <property type="match status" value="1"/>
</dbReference>
<dbReference type="Pfam" id="PF00999">
    <property type="entry name" value="Na_H_Exchanger"/>
    <property type="match status" value="1"/>
</dbReference>
<dbReference type="PRINTS" id="PR01084">
    <property type="entry name" value="NAHEXCHNGR"/>
</dbReference>
<dbReference type="PRINTS" id="PR01088">
    <property type="entry name" value="NAHEXCHNGR6"/>
</dbReference>
<protein>
    <recommendedName>
        <fullName>Sodium/hydrogen exchanger 9</fullName>
    </recommendedName>
    <alternativeName>
        <fullName>Na(+)/H(+) exchanger 9</fullName>
        <shortName>NHE-9</shortName>
    </alternativeName>
    <alternativeName>
        <fullName>Sodium/hydrogen exchanger</fullName>
    </alternativeName>
    <alternativeName>
        <fullName>Solute carrier family 9 member 9</fullName>
    </alternativeName>
</protein>
<reference key="1">
    <citation type="journal article" date="2004" name="Nature">
        <title>Genome sequence of the Brown Norway rat yields insights into mammalian evolution.</title>
        <authorList>
            <person name="Gibbs R.A."/>
            <person name="Weinstock G.M."/>
            <person name="Metzker M.L."/>
            <person name="Muzny D.M."/>
            <person name="Sodergren E.J."/>
            <person name="Scherer S."/>
            <person name="Scott G."/>
            <person name="Steffen D."/>
            <person name="Worley K.C."/>
            <person name="Burch P.E."/>
            <person name="Okwuonu G."/>
            <person name="Hines S."/>
            <person name="Lewis L."/>
            <person name="Deramo C."/>
            <person name="Delgado O."/>
            <person name="Dugan-Rocha S."/>
            <person name="Miner G."/>
            <person name="Morgan M."/>
            <person name="Hawes A."/>
            <person name="Gill R."/>
            <person name="Holt R.A."/>
            <person name="Adams M.D."/>
            <person name="Amanatides P.G."/>
            <person name="Baden-Tillson H."/>
            <person name="Barnstead M."/>
            <person name="Chin S."/>
            <person name="Evans C.A."/>
            <person name="Ferriera S."/>
            <person name="Fosler C."/>
            <person name="Glodek A."/>
            <person name="Gu Z."/>
            <person name="Jennings D."/>
            <person name="Kraft C.L."/>
            <person name="Nguyen T."/>
            <person name="Pfannkoch C.M."/>
            <person name="Sitter C."/>
            <person name="Sutton G.G."/>
            <person name="Venter J.C."/>
            <person name="Woodage T."/>
            <person name="Smith D."/>
            <person name="Lee H.-M."/>
            <person name="Gustafson E."/>
            <person name="Cahill P."/>
            <person name="Kana A."/>
            <person name="Doucette-Stamm L."/>
            <person name="Weinstock K."/>
            <person name="Fechtel K."/>
            <person name="Weiss R.B."/>
            <person name="Dunn D.M."/>
            <person name="Green E.D."/>
            <person name="Blakesley R.W."/>
            <person name="Bouffard G.G."/>
            <person name="De Jong P.J."/>
            <person name="Osoegawa K."/>
            <person name="Zhu B."/>
            <person name="Marra M."/>
            <person name="Schein J."/>
            <person name="Bosdet I."/>
            <person name="Fjell C."/>
            <person name="Jones S."/>
            <person name="Krzywinski M."/>
            <person name="Mathewson C."/>
            <person name="Siddiqui A."/>
            <person name="Wye N."/>
            <person name="McPherson J."/>
            <person name="Zhao S."/>
            <person name="Fraser C.M."/>
            <person name="Shetty J."/>
            <person name="Shatsman S."/>
            <person name="Geer K."/>
            <person name="Chen Y."/>
            <person name="Abramzon S."/>
            <person name="Nierman W.C."/>
            <person name="Havlak P.H."/>
            <person name="Chen R."/>
            <person name="Durbin K.J."/>
            <person name="Egan A."/>
            <person name="Ren Y."/>
            <person name="Song X.-Z."/>
            <person name="Li B."/>
            <person name="Liu Y."/>
            <person name="Qin X."/>
            <person name="Cawley S."/>
            <person name="Cooney A.J."/>
            <person name="D'Souza L.M."/>
            <person name="Martin K."/>
            <person name="Wu J.Q."/>
            <person name="Gonzalez-Garay M.L."/>
            <person name="Jackson A.R."/>
            <person name="Kalafus K.J."/>
            <person name="McLeod M.P."/>
            <person name="Milosavljevic A."/>
            <person name="Virk D."/>
            <person name="Volkov A."/>
            <person name="Wheeler D.A."/>
            <person name="Zhang Z."/>
            <person name="Bailey J.A."/>
            <person name="Eichler E.E."/>
            <person name="Tuzun E."/>
            <person name="Birney E."/>
            <person name="Mongin E."/>
            <person name="Ureta-Vidal A."/>
            <person name="Woodwark C."/>
            <person name="Zdobnov E."/>
            <person name="Bork P."/>
            <person name="Suyama M."/>
            <person name="Torrents D."/>
            <person name="Alexandersson M."/>
            <person name="Trask B.J."/>
            <person name="Young J.M."/>
            <person name="Huang H."/>
            <person name="Wang H."/>
            <person name="Xing H."/>
            <person name="Daniels S."/>
            <person name="Gietzen D."/>
            <person name="Schmidt J."/>
            <person name="Stevens K."/>
            <person name="Vitt U."/>
            <person name="Wingrove J."/>
            <person name="Camara F."/>
            <person name="Mar Alba M."/>
            <person name="Abril J.F."/>
            <person name="Guigo R."/>
            <person name="Smit A."/>
            <person name="Dubchak I."/>
            <person name="Rubin E.M."/>
            <person name="Couronne O."/>
            <person name="Poliakov A."/>
            <person name="Huebner N."/>
            <person name="Ganten D."/>
            <person name="Goesele C."/>
            <person name="Hummel O."/>
            <person name="Kreitler T."/>
            <person name="Lee Y.-A."/>
            <person name="Monti J."/>
            <person name="Schulz H."/>
            <person name="Zimdahl H."/>
            <person name="Himmelbauer H."/>
            <person name="Lehrach H."/>
            <person name="Jacob H.J."/>
            <person name="Bromberg S."/>
            <person name="Gullings-Handley J."/>
            <person name="Jensen-Seaman M.I."/>
            <person name="Kwitek A.E."/>
            <person name="Lazar J."/>
            <person name="Pasko D."/>
            <person name="Tonellato P.J."/>
            <person name="Twigger S."/>
            <person name="Ponting C.P."/>
            <person name="Duarte J.M."/>
            <person name="Rice S."/>
            <person name="Goodstadt L."/>
            <person name="Beatson S.A."/>
            <person name="Emes R.D."/>
            <person name="Winter E.E."/>
            <person name="Webber C."/>
            <person name="Brandt P."/>
            <person name="Nyakatura G."/>
            <person name="Adetobi M."/>
            <person name="Chiaromonte F."/>
            <person name="Elnitski L."/>
            <person name="Eswara P."/>
            <person name="Hardison R.C."/>
            <person name="Hou M."/>
            <person name="Kolbe D."/>
            <person name="Makova K."/>
            <person name="Miller W."/>
            <person name="Nekrutenko A."/>
            <person name="Riemer C."/>
            <person name="Schwartz S."/>
            <person name="Taylor J."/>
            <person name="Yang S."/>
            <person name="Zhang Y."/>
            <person name="Lindpaintner K."/>
            <person name="Andrews T.D."/>
            <person name="Caccamo M."/>
            <person name="Clamp M."/>
            <person name="Clarke L."/>
            <person name="Curwen V."/>
            <person name="Durbin R.M."/>
            <person name="Eyras E."/>
            <person name="Searle S.M."/>
            <person name="Cooper G.M."/>
            <person name="Batzoglou S."/>
            <person name="Brudno M."/>
            <person name="Sidow A."/>
            <person name="Stone E.A."/>
            <person name="Payseur B.A."/>
            <person name="Bourque G."/>
            <person name="Lopez-Otin C."/>
            <person name="Puente X.S."/>
            <person name="Chakrabarti K."/>
            <person name="Chatterji S."/>
            <person name="Dewey C."/>
            <person name="Pachter L."/>
            <person name="Bray N."/>
            <person name="Yap V.B."/>
            <person name="Caspi A."/>
            <person name="Tesler G."/>
            <person name="Pevzner P.A."/>
            <person name="Haussler D."/>
            <person name="Roskin K.M."/>
            <person name="Baertsch R."/>
            <person name="Clawson H."/>
            <person name="Furey T.S."/>
            <person name="Hinrichs A.S."/>
            <person name="Karolchik D."/>
            <person name="Kent W.J."/>
            <person name="Rosenbloom K.R."/>
            <person name="Trumbower H."/>
            <person name="Weirauch M."/>
            <person name="Cooper D.N."/>
            <person name="Stenson P.D."/>
            <person name="Ma B."/>
            <person name="Brent M."/>
            <person name="Arumugam M."/>
            <person name="Shteynberg D."/>
            <person name="Copley R.R."/>
            <person name="Taylor M.S."/>
            <person name="Riethman H."/>
            <person name="Mudunuri U."/>
            <person name="Peterson J."/>
            <person name="Guyer M."/>
            <person name="Felsenfeld A."/>
            <person name="Old S."/>
            <person name="Mockrin S."/>
            <person name="Collins F.S."/>
        </authorList>
    </citation>
    <scope>NUCLEOTIDE SEQUENCE [LARGE SCALE GENOMIC DNA]</scope>
    <source>
        <strain>Brown Norway</strain>
    </source>
</reference>
<reference key="2">
    <citation type="journal article" date="2006" name="J. Neurosci.">
        <title>Vestibular hair bundles control pH with (Na+, K+)/H+ exchangers NHE6 and NHE9.</title>
        <authorList>
            <person name="Hill J.K."/>
            <person name="Brett C.L."/>
            <person name="Chyou A."/>
            <person name="Kallay L.M."/>
            <person name="Sakaguchi M."/>
            <person name="Rao R."/>
            <person name="Gillespie P.G."/>
        </authorList>
    </citation>
    <scope>TISSUE SPECIFICITY</scope>
</reference>
<reference key="3">
    <citation type="journal article" date="2011" name="Am. J. Med. Genet. B Neuropsychiatr. Genet.">
        <title>SLC9A9 mutations, gene expression, and protein-protein interactions in rat models of attention-deficit/hyperactivity disorder.</title>
        <authorList>
            <person name="Zhang-James Y."/>
            <person name="DasBanerjee T."/>
            <person name="Sagvolden T."/>
            <person name="Middleton F.A."/>
            <person name="Faraone S.V."/>
        </authorList>
    </citation>
    <scope>TISSUE SPECIFICITY</scope>
    <scope>INTERACTION WITH RACK1 AND CHP1</scope>
    <scope>VARIANTS GLY-512 AND ARG-534</scope>
    <scope>CHARACTERIZATION OF VARIANTS GLY-512 AND ARG-534</scope>
</reference>
<comment type="function">
    <text evidence="2 3">Endosomal Na(+), K(+)/H(+) antiporter. Mediates the electroneutral exchange of endosomal luminal H(+) for a cytosolic Na(+) or K(+). By facilitating proton efflux, SLC9A9 counteracts the acidity generated by vacuolar (V)-ATPase, thereby limiting luminal acidification. Regulates organellar pH and consequently, endosome maturation and endocytic trafficking of plasma membrane receptors and neurotransporters (By similarity). Promotes the recycling of transferrin receptors back to the cell surface to facilitate additional iron uptake in the brain (By similarity). Regulates synaptic transmission by regulating the luminal pH of axonal endosomes. Regulates phagosome lumenal pH, thus affecting phagosome maturation, and consequently, microbicidal activity in macrophages. Can also be active at the cell surface of specialized cells, e.g., in the inner ear hair bundles uses the high K(+) of the endolymph to regulate intracelular pH (By similarity).</text>
</comment>
<comment type="catalytic activity">
    <reaction evidence="2">
        <text>Na(+)(in) + H(+)(out) = Na(+)(out) + H(+)(in)</text>
        <dbReference type="Rhea" id="RHEA:29419"/>
        <dbReference type="ChEBI" id="CHEBI:15378"/>
        <dbReference type="ChEBI" id="CHEBI:29101"/>
    </reaction>
</comment>
<comment type="catalytic activity">
    <reaction evidence="2">
        <text>K(+)(in) + H(+)(out) = K(+)(out) + H(+)(in)</text>
        <dbReference type="Rhea" id="RHEA:29467"/>
        <dbReference type="ChEBI" id="CHEBI:15378"/>
        <dbReference type="ChEBI" id="CHEBI:29103"/>
    </reaction>
</comment>
<comment type="subunit">
    <text evidence="1 5">Homodimer; phosphatidylinositol-4,5-bisphosphate (PIP2) and phosphatidylinositol 3,4,5-trisphosphate (PIP3) could be involved in the dimer stabilization (By similarity). Interacts (via the C-terminus) with RACK1 (PubMed:21858920). Interacts with CHP1 (PubMed:21858920).</text>
</comment>
<comment type="subcellular location">
    <subcellularLocation>
        <location evidence="3">Late endosome membrane</location>
        <topology evidence="1">Multi-pass membrane protein</topology>
    </subcellularLocation>
    <subcellularLocation>
        <location evidence="3">Early endosome membrane</location>
        <topology evidence="1">Multi-pass membrane protein</topology>
    </subcellularLocation>
    <subcellularLocation>
        <location evidence="3">Recycling endosome membrane</location>
        <topology evidence="1">Multi-pass membrane protein</topology>
    </subcellularLocation>
    <subcellularLocation>
        <location evidence="2">Cell membrane</location>
        <topology evidence="1">Multi-pass membrane protein</topology>
    </subcellularLocation>
    <subcellularLocation>
        <location evidence="2">Cytoplasmic vesicle</location>
        <location evidence="2">Phagosome membrane</location>
        <topology evidence="1">Multi-pass membrane protein</topology>
    </subcellularLocation>
    <text evidence="2">Localized to the plasma membrane in inner ear hair cell bundle.</text>
</comment>
<comment type="tissue specificity">
    <text evidence="4 5">Expressed in hair bundles and in vestibular hair bundles (PubMed:17005858). Expressed in brain (PubMed:21858920).</text>
</comment>
<comment type="similarity">
    <text evidence="6">Belongs to the monovalent cation:proton antiporter 1 (CPA1) transporter (TC 2.A.36) family.</text>
</comment>
<feature type="chain" id="PRO_0000457417" description="Sodium/hydrogen exchanger 9">
    <location>
        <begin position="1"/>
        <end position="644"/>
    </location>
</feature>
<feature type="topological domain" description="Lumenal" evidence="6">
    <location>
        <begin position="1"/>
        <end position="20"/>
    </location>
</feature>
<feature type="transmembrane region" description="Helical; Name=1" evidence="1">
    <location>
        <begin position="21"/>
        <end position="41"/>
    </location>
</feature>
<feature type="topological domain" description="Cytoplasmic" evidence="6">
    <location>
        <begin position="42"/>
        <end position="45"/>
    </location>
</feature>
<feature type="transmembrane region" description="Helical; Name=2" evidence="1">
    <location>
        <begin position="46"/>
        <end position="66"/>
    </location>
</feature>
<feature type="topological domain" description="Lumenal" evidence="6">
    <location>
        <begin position="67"/>
        <end position="126"/>
    </location>
</feature>
<feature type="transmembrane region" description="Helical; Name=3" evidence="1">
    <location>
        <begin position="127"/>
        <end position="147"/>
    </location>
</feature>
<feature type="topological domain" description="Cytoplasmic" evidence="6">
    <location>
        <begin position="148"/>
        <end position="164"/>
    </location>
</feature>
<feature type="transmembrane region" description="Helical; Name=4" evidence="1">
    <location>
        <begin position="165"/>
        <end position="185"/>
    </location>
</feature>
<feature type="topological domain" description="Lumenal" evidence="6">
    <location>
        <begin position="186"/>
        <end position="203"/>
    </location>
</feature>
<feature type="transmembrane region" description="Helical; Name=5" evidence="1">
    <location>
        <begin position="204"/>
        <end position="224"/>
    </location>
</feature>
<feature type="topological domain" description="Cytoplasmic" evidence="6">
    <location>
        <begin position="225"/>
        <end position="235"/>
    </location>
</feature>
<feature type="transmembrane region" description="Helical; Name=6" evidence="1">
    <location>
        <begin position="236"/>
        <end position="256"/>
    </location>
</feature>
<feature type="topological domain" description="Lumenal" evidence="6">
    <location>
        <begin position="257"/>
        <end position="277"/>
    </location>
</feature>
<feature type="transmembrane region" description="Helical; Name=7" evidence="1">
    <location>
        <begin position="278"/>
        <end position="298"/>
    </location>
</feature>
<feature type="topological domain" description="Cytoplasmic" evidence="6">
    <location>
        <begin position="299"/>
        <end position="309"/>
    </location>
</feature>
<feature type="transmembrane region" description="Helical; Name=8" evidence="1">
    <location>
        <begin position="310"/>
        <end position="327"/>
    </location>
</feature>
<feature type="topological domain" description="Lumenal" evidence="6">
    <location>
        <begin position="328"/>
        <end position="333"/>
    </location>
</feature>
<feature type="transmembrane region" description="Helical; Name=9" evidence="1">
    <location>
        <begin position="334"/>
        <end position="350"/>
    </location>
</feature>
<feature type="topological domain" description="Cytoplasmic" evidence="6">
    <location>
        <begin position="351"/>
        <end position="364"/>
    </location>
</feature>
<feature type="transmembrane region" description="Helical; Name=10" evidence="1">
    <location>
        <begin position="365"/>
        <end position="385"/>
    </location>
</feature>
<feature type="topological domain" description="Lumenal" evidence="6">
    <location>
        <position position="386"/>
    </location>
</feature>
<feature type="transmembrane region" description="Helical; Name=11" evidence="1">
    <location>
        <begin position="387"/>
        <end position="407"/>
    </location>
</feature>
<feature type="topological domain" description="Cytoplasmic" evidence="6">
    <location>
        <begin position="408"/>
        <end position="429"/>
    </location>
</feature>
<feature type="transmembrane region" description="Helical; Name=12" evidence="1">
    <location>
        <begin position="430"/>
        <end position="450"/>
    </location>
</feature>
<feature type="topological domain" description="Lumenal" evidence="6">
    <location>
        <begin position="451"/>
        <end position="465"/>
    </location>
</feature>
<feature type="transmembrane region" description="Helical; Name=13" evidence="1">
    <location>
        <begin position="466"/>
        <end position="486"/>
    </location>
</feature>
<feature type="topological domain" description="Cytoplasmic" evidence="3">
    <location>
        <begin position="487"/>
        <end position="644"/>
    </location>
</feature>
<feature type="sequence variant" description="Found in WKY/NCrl rat, a rat model of attention deficit hyperactive disorder. Always found associated with R-534. 2-fold increase in binding CHP1; when associated with R-534." evidence="5">
    <original>V</original>
    <variation>G</variation>
    <location>
        <position position="512"/>
    </location>
</feature>
<feature type="sequence variant" description="Found in WKY/NCrl rat, a rat model of attention deficit hyperactive disorder. Always found associated with G-512. 2-fold increase in binding CHP1; when associated with G-512." evidence="5">
    <original>K</original>
    <variation>R</variation>
    <location>
        <position position="534"/>
    </location>
</feature>
<accession>D4A7H1</accession>
<keyword id="KW-0050">Antiport</keyword>
<keyword id="KW-1003">Cell membrane</keyword>
<keyword id="KW-0968">Cytoplasmic vesicle</keyword>
<keyword id="KW-0967">Endosome</keyword>
<keyword id="KW-0406">Ion transport</keyword>
<keyword id="KW-0472">Membrane</keyword>
<keyword id="KW-1185">Reference proteome</keyword>
<keyword id="KW-0915">Sodium</keyword>
<keyword id="KW-0739">Sodium transport</keyword>
<keyword id="KW-0812">Transmembrane</keyword>
<keyword id="KW-1133">Transmembrane helix</keyword>
<keyword id="KW-0813">Transport</keyword>
<proteinExistence type="evidence at protein level"/>
<name>SL9A9_RAT</name>
<gene>
    <name type="primary">Slc9a9</name>
    <name type="synonym">Nhe9</name>
</gene>